<organism>
    <name type="scientific">Phormidium lapideum</name>
    <dbReference type="NCBI Taxonomy" id="32060"/>
    <lineage>
        <taxon>Bacteria</taxon>
        <taxon>Bacillati</taxon>
        <taxon>Cyanobacteriota</taxon>
        <taxon>Cyanophyceae</taxon>
        <taxon>Oscillatoriophycideae</taxon>
        <taxon>Oscillatoriales</taxon>
        <taxon>Oscillatoriaceae</taxon>
        <taxon>Phormidium</taxon>
    </lineage>
</organism>
<keyword id="KW-0067">ATP-binding</keyword>
<keyword id="KW-0963">Cytoplasm</keyword>
<keyword id="KW-0903">Direct protein sequencing</keyword>
<keyword id="KW-0436">Ligase</keyword>
<keyword id="KW-0547">Nucleotide-binding</keyword>
<dbReference type="EC" id="6.3.1.2" evidence="1"/>
<dbReference type="PIR" id="PX0011">
    <property type="entry name" value="PX0011"/>
</dbReference>
<dbReference type="GO" id="GO:0005737">
    <property type="term" value="C:cytoplasm"/>
    <property type="evidence" value="ECO:0007669"/>
    <property type="project" value="UniProtKB-SubCell"/>
</dbReference>
<dbReference type="GO" id="GO:0005524">
    <property type="term" value="F:ATP binding"/>
    <property type="evidence" value="ECO:0007669"/>
    <property type="project" value="UniProtKB-KW"/>
</dbReference>
<dbReference type="GO" id="GO:0004356">
    <property type="term" value="F:glutamine synthetase activity"/>
    <property type="evidence" value="ECO:0007669"/>
    <property type="project" value="UniProtKB-EC"/>
</dbReference>
<accession>P20479</accession>
<feature type="chain" id="PRO_0000153217" description="Glutamine synthetase">
    <location>
        <begin position="1"/>
        <end position="23" status="greater than"/>
    </location>
</feature>
<feature type="non-terminal residue">
    <location>
        <position position="23"/>
    </location>
</feature>
<evidence type="ECO:0000250" key="1">
    <source>
        <dbReference type="UniProtKB" id="P77961"/>
    </source>
</evidence>
<evidence type="ECO:0000250" key="2">
    <source>
        <dbReference type="UniProtKB" id="P9WN39"/>
    </source>
</evidence>
<evidence type="ECO:0000250" key="3">
    <source>
        <dbReference type="UniProtKB" id="Q3V5W6"/>
    </source>
</evidence>
<proteinExistence type="evidence at protein level"/>
<protein>
    <recommendedName>
        <fullName evidence="1">Glutamine synthetase</fullName>
        <shortName evidence="1">GS</shortName>
        <ecNumber evidence="1">6.3.1.2</ecNumber>
    </recommendedName>
    <alternativeName>
        <fullName evidence="1">Glutamate--ammonia ligase</fullName>
    </alternativeName>
    <alternativeName>
        <fullName evidence="1">Glutamine synthetase I beta</fullName>
        <shortName evidence="1">GSI beta</shortName>
    </alternativeName>
</protein>
<sequence length="23" mass="2656">TTPQEVLSRIKDQGIKLIDLKFI</sequence>
<name>GLN1B_PHOLP</name>
<reference key="1">
    <citation type="journal article" date="1988" name="J. Biochem.">
        <title>Glutamine synthetase from a cyanobacterium, Phormidium lapideum: purification, characterization, and comparison with other cyanobacterial enzymes.</title>
        <authorList>
            <person name="Sawa Y."/>
            <person name="Ochiai H."/>
            <person name="Yoshida K."/>
            <person name="Tanizawa K."/>
            <person name="Tanaka H."/>
            <person name="Soda K."/>
        </authorList>
    </citation>
    <scope>PROTEIN SEQUENCE</scope>
</reference>
<comment type="function">
    <text evidence="1">Involved in nitrogen metabolism via ammonium assimilation. Catalyzes the ATP-dependent biosynthesis of glutamine from glutamate and ammonia.</text>
</comment>
<comment type="catalytic activity">
    <reaction evidence="1">
        <text>L-glutamate + NH4(+) + ATP = L-glutamine + ADP + phosphate + H(+)</text>
        <dbReference type="Rhea" id="RHEA:16169"/>
        <dbReference type="ChEBI" id="CHEBI:15378"/>
        <dbReference type="ChEBI" id="CHEBI:28938"/>
        <dbReference type="ChEBI" id="CHEBI:29985"/>
        <dbReference type="ChEBI" id="CHEBI:30616"/>
        <dbReference type="ChEBI" id="CHEBI:43474"/>
        <dbReference type="ChEBI" id="CHEBI:58359"/>
        <dbReference type="ChEBI" id="CHEBI:456216"/>
        <dbReference type="EC" id="6.3.1.2"/>
    </reaction>
</comment>
<comment type="cofactor">
    <cofactor evidence="1">
        <name>Mg(2+)</name>
        <dbReference type="ChEBI" id="CHEBI:18420"/>
    </cofactor>
    <text evidence="1">Binds 2 Mg(2+) ions per subunit.</text>
</comment>
<comment type="activity regulation">
    <text evidence="3">The activity of this enzyme could be controlled by adenylation under conditions of abundant glutamine.</text>
</comment>
<comment type="subunit">
    <text evidence="1">Oligomer of 12 subunits arranged in the form of two hexagons.</text>
</comment>
<comment type="subcellular location">
    <subcellularLocation>
        <location evidence="2">Cytoplasm</location>
    </subcellularLocation>
</comment>
<comment type="similarity">
    <text evidence="1">Belongs to the glutamine synthetase family.</text>
</comment>